<reference key="1">
    <citation type="journal article" date="2000" name="Nature">
        <title>Sequence and analysis of chromosome 1 of the plant Arabidopsis thaliana.</title>
        <authorList>
            <person name="Theologis A."/>
            <person name="Ecker J.R."/>
            <person name="Palm C.J."/>
            <person name="Federspiel N.A."/>
            <person name="Kaul S."/>
            <person name="White O."/>
            <person name="Alonso J."/>
            <person name="Altafi H."/>
            <person name="Araujo R."/>
            <person name="Bowman C.L."/>
            <person name="Brooks S.Y."/>
            <person name="Buehler E."/>
            <person name="Chan A."/>
            <person name="Chao Q."/>
            <person name="Chen H."/>
            <person name="Cheuk R.F."/>
            <person name="Chin C.W."/>
            <person name="Chung M.K."/>
            <person name="Conn L."/>
            <person name="Conway A.B."/>
            <person name="Conway A.R."/>
            <person name="Creasy T.H."/>
            <person name="Dewar K."/>
            <person name="Dunn P."/>
            <person name="Etgu P."/>
            <person name="Feldblyum T.V."/>
            <person name="Feng J.-D."/>
            <person name="Fong B."/>
            <person name="Fujii C.Y."/>
            <person name="Gill J.E."/>
            <person name="Goldsmith A.D."/>
            <person name="Haas B."/>
            <person name="Hansen N.F."/>
            <person name="Hughes B."/>
            <person name="Huizar L."/>
            <person name="Hunter J.L."/>
            <person name="Jenkins J."/>
            <person name="Johnson-Hopson C."/>
            <person name="Khan S."/>
            <person name="Khaykin E."/>
            <person name="Kim C.J."/>
            <person name="Koo H.L."/>
            <person name="Kremenetskaia I."/>
            <person name="Kurtz D.B."/>
            <person name="Kwan A."/>
            <person name="Lam B."/>
            <person name="Langin-Hooper S."/>
            <person name="Lee A."/>
            <person name="Lee J.M."/>
            <person name="Lenz C.A."/>
            <person name="Li J.H."/>
            <person name="Li Y.-P."/>
            <person name="Lin X."/>
            <person name="Liu S.X."/>
            <person name="Liu Z.A."/>
            <person name="Luros J.S."/>
            <person name="Maiti R."/>
            <person name="Marziali A."/>
            <person name="Militscher J."/>
            <person name="Miranda M."/>
            <person name="Nguyen M."/>
            <person name="Nierman W.C."/>
            <person name="Osborne B.I."/>
            <person name="Pai G."/>
            <person name="Peterson J."/>
            <person name="Pham P.K."/>
            <person name="Rizzo M."/>
            <person name="Rooney T."/>
            <person name="Rowley D."/>
            <person name="Sakano H."/>
            <person name="Salzberg S.L."/>
            <person name="Schwartz J.R."/>
            <person name="Shinn P."/>
            <person name="Southwick A.M."/>
            <person name="Sun H."/>
            <person name="Tallon L.J."/>
            <person name="Tambunga G."/>
            <person name="Toriumi M.J."/>
            <person name="Town C.D."/>
            <person name="Utterback T."/>
            <person name="Van Aken S."/>
            <person name="Vaysberg M."/>
            <person name="Vysotskaia V.S."/>
            <person name="Walker M."/>
            <person name="Wu D."/>
            <person name="Yu G."/>
            <person name="Fraser C.M."/>
            <person name="Venter J.C."/>
            <person name="Davis R.W."/>
        </authorList>
    </citation>
    <scope>NUCLEOTIDE SEQUENCE [LARGE SCALE GENOMIC DNA]</scope>
    <source>
        <strain>cv. Columbia</strain>
    </source>
</reference>
<reference key="2">
    <citation type="journal article" date="2017" name="Plant J.">
        <title>Araport11: a complete reannotation of the Arabidopsis thaliana reference genome.</title>
        <authorList>
            <person name="Cheng C.Y."/>
            <person name="Krishnakumar V."/>
            <person name="Chan A.P."/>
            <person name="Thibaud-Nissen F."/>
            <person name="Schobel S."/>
            <person name="Town C.D."/>
        </authorList>
    </citation>
    <scope>GENOME REANNOTATION</scope>
    <source>
        <strain>cv. Columbia</strain>
    </source>
</reference>
<reference key="3">
    <citation type="journal article" date="2003" name="Science">
        <title>Empirical analysis of transcriptional activity in the Arabidopsis genome.</title>
        <authorList>
            <person name="Yamada K."/>
            <person name="Lim J."/>
            <person name="Dale J.M."/>
            <person name="Chen H."/>
            <person name="Shinn P."/>
            <person name="Palm C.J."/>
            <person name="Southwick A.M."/>
            <person name="Wu H.C."/>
            <person name="Kim C.J."/>
            <person name="Nguyen M."/>
            <person name="Pham P.K."/>
            <person name="Cheuk R.F."/>
            <person name="Karlin-Newmann G."/>
            <person name="Liu S.X."/>
            <person name="Lam B."/>
            <person name="Sakano H."/>
            <person name="Wu T."/>
            <person name="Yu G."/>
            <person name="Miranda M."/>
            <person name="Quach H.L."/>
            <person name="Tripp M."/>
            <person name="Chang C.H."/>
            <person name="Lee J.M."/>
            <person name="Toriumi M.J."/>
            <person name="Chan M.M."/>
            <person name="Tang C.C."/>
            <person name="Onodera C.S."/>
            <person name="Deng J.M."/>
            <person name="Akiyama K."/>
            <person name="Ansari Y."/>
            <person name="Arakawa T."/>
            <person name="Banh J."/>
            <person name="Banno F."/>
            <person name="Bowser L."/>
            <person name="Brooks S.Y."/>
            <person name="Carninci P."/>
            <person name="Chao Q."/>
            <person name="Choy N."/>
            <person name="Enju A."/>
            <person name="Goldsmith A.D."/>
            <person name="Gurjal M."/>
            <person name="Hansen N.F."/>
            <person name="Hayashizaki Y."/>
            <person name="Johnson-Hopson C."/>
            <person name="Hsuan V.W."/>
            <person name="Iida K."/>
            <person name="Karnes M."/>
            <person name="Khan S."/>
            <person name="Koesema E."/>
            <person name="Ishida J."/>
            <person name="Jiang P.X."/>
            <person name="Jones T."/>
            <person name="Kawai J."/>
            <person name="Kamiya A."/>
            <person name="Meyers C."/>
            <person name="Nakajima M."/>
            <person name="Narusaka M."/>
            <person name="Seki M."/>
            <person name="Sakurai T."/>
            <person name="Satou M."/>
            <person name="Tamse R."/>
            <person name="Vaysberg M."/>
            <person name="Wallender E.K."/>
            <person name="Wong C."/>
            <person name="Yamamura Y."/>
            <person name="Yuan S."/>
            <person name="Shinozaki K."/>
            <person name="Davis R.W."/>
            <person name="Theologis A."/>
            <person name="Ecker J.R."/>
        </authorList>
    </citation>
    <scope>NUCLEOTIDE SEQUENCE [LARGE SCALE MRNA]</scope>
    <source>
        <strain>cv. Columbia</strain>
    </source>
</reference>
<gene>
    <name type="ordered locus">At1g60970</name>
    <name type="ORF">T7P1.11</name>
</gene>
<proteinExistence type="evidence at transcript level"/>
<keyword id="KW-0963">Cytoplasm</keyword>
<keyword id="KW-0968">Cytoplasmic vesicle</keyword>
<keyword id="KW-0931">ER-Golgi transport</keyword>
<keyword id="KW-0333">Golgi apparatus</keyword>
<keyword id="KW-0472">Membrane</keyword>
<keyword id="KW-0653">Protein transport</keyword>
<keyword id="KW-1185">Reference proteome</keyword>
<keyword id="KW-0813">Transport</keyword>
<comment type="function">
    <text evidence="2">The coatomer is a cytosolic protein complex that binds to dilysine motifs and reversibly associates with Golgi non-clathrin-coated vesicles, which further mediate biosynthetic protein transport from the ER, via the Golgi up to the trans Golgi network. Coatomer complex is required for budding from Golgi membranes, and is essential for the retrograde Golgi-to-ER transport of dilysine-tagged proteins (By similarity). The zeta subunit may be involved in regulating the coat assembly and, hence, the rate of biosynthetic protein transport due to its association-dissociation properties with the coatomer complex (By similarity).</text>
</comment>
<comment type="subunit">
    <text evidence="1">Oligomeric complex that consists of at least the alpha, beta, beta', gamma, delta, epsilon and zeta subunits.</text>
</comment>
<comment type="subcellular location">
    <subcellularLocation>
        <location evidence="1">Cytoplasm</location>
    </subcellularLocation>
    <subcellularLocation>
        <location evidence="1">Golgi apparatus membrane</location>
        <topology evidence="1">Peripheral membrane protein</topology>
        <orientation evidence="1">Cytoplasmic side</orientation>
    </subcellularLocation>
    <subcellularLocation>
        <location evidence="1">Cytoplasmic vesicle</location>
        <location evidence="1">COPI-coated vesicle membrane</location>
        <topology evidence="1">Peripheral membrane protein</topology>
        <orientation evidence="1">Cytoplasmic side</orientation>
    </subcellularLocation>
    <text evidence="1">The coatomer is cytoplasmic or polymerized on the cytoplasmic side of the Golgi, as well as on the vesicles/buds originating from it.</text>
</comment>
<comment type="similarity">
    <text evidence="3">Belongs to the adaptor complexes small subunit family.</text>
</comment>
<comment type="sequence caution" evidence="3">
    <conflict type="erroneous gene model prediction">
        <sequence resource="EMBL-CDS" id="AAG51650"/>
    </conflict>
</comment>
<sequence length="177" mass="19615">MELPPKVKNILLLDSEGKRVAVKYYSDDWPTNSAQEAFEKSVFTKTQKTNARTEVEVTALENNIVVYKFVQDLHFFVTGGEEENELILASVLEGLFDAVTLLLRSNVDKREALDNLDLIFLSFDEIIDGGIVLETDANVIAGKAGINSTDPNAPLSEQTISQALATAREHLTRSLMK</sequence>
<dbReference type="EMBL" id="AC018908">
    <property type="protein sequence ID" value="AAG51650.1"/>
    <property type="status" value="ALT_SEQ"/>
    <property type="molecule type" value="Genomic_DNA"/>
</dbReference>
<dbReference type="EMBL" id="CP002684">
    <property type="protein sequence ID" value="AEE33754.1"/>
    <property type="molecule type" value="Genomic_DNA"/>
</dbReference>
<dbReference type="EMBL" id="AY053405">
    <property type="protein sequence ID" value="AAK96635.1"/>
    <property type="molecule type" value="mRNA"/>
</dbReference>
<dbReference type="EMBL" id="AY133515">
    <property type="protein sequence ID" value="AAM91345.1"/>
    <property type="molecule type" value="mRNA"/>
</dbReference>
<dbReference type="PIR" id="C96635">
    <property type="entry name" value="C96635"/>
</dbReference>
<dbReference type="RefSeq" id="NP_564767.1">
    <property type="nucleotide sequence ID" value="NM_104777.4"/>
</dbReference>
<dbReference type="SMR" id="Q940S5"/>
<dbReference type="BioGRID" id="27612">
    <property type="interactions" value="5"/>
</dbReference>
<dbReference type="FunCoup" id="Q940S5">
    <property type="interactions" value="2623"/>
</dbReference>
<dbReference type="STRING" id="3702.Q940S5"/>
<dbReference type="PaxDb" id="3702-AT1G60970.1"/>
<dbReference type="ProteomicsDB" id="241175"/>
<dbReference type="DNASU" id="842388"/>
<dbReference type="EnsemblPlants" id="AT1G60970.1">
    <property type="protein sequence ID" value="AT1G60970.1"/>
    <property type="gene ID" value="AT1G60970"/>
</dbReference>
<dbReference type="GeneID" id="842388"/>
<dbReference type="Gramene" id="AT1G60970.1">
    <property type="protein sequence ID" value="AT1G60970.1"/>
    <property type="gene ID" value="AT1G60970"/>
</dbReference>
<dbReference type="KEGG" id="ath:AT1G60970"/>
<dbReference type="Araport" id="AT1G60970"/>
<dbReference type="TAIR" id="AT1G60970"/>
<dbReference type="eggNOG" id="KOG3343">
    <property type="taxonomic scope" value="Eukaryota"/>
</dbReference>
<dbReference type="HOGENOM" id="CLU_086803_1_1_1"/>
<dbReference type="InParanoid" id="Q940S5"/>
<dbReference type="OMA" id="NEDEWLF"/>
<dbReference type="PhylomeDB" id="Q940S5"/>
<dbReference type="PRO" id="PR:Q940S5"/>
<dbReference type="Proteomes" id="UP000006548">
    <property type="component" value="Chromosome 1"/>
</dbReference>
<dbReference type="ExpressionAtlas" id="Q940S5">
    <property type="expression patterns" value="baseline and differential"/>
</dbReference>
<dbReference type="GO" id="GO:0030126">
    <property type="term" value="C:COPI vesicle coat"/>
    <property type="evidence" value="ECO:0007669"/>
    <property type="project" value="InterPro"/>
</dbReference>
<dbReference type="GO" id="GO:0000139">
    <property type="term" value="C:Golgi membrane"/>
    <property type="evidence" value="ECO:0007669"/>
    <property type="project" value="UniProtKB-SubCell"/>
</dbReference>
<dbReference type="GO" id="GO:0005634">
    <property type="term" value="C:nucleus"/>
    <property type="evidence" value="ECO:0007005"/>
    <property type="project" value="TAIR"/>
</dbReference>
<dbReference type="GO" id="GO:0015031">
    <property type="term" value="P:protein transport"/>
    <property type="evidence" value="ECO:0007669"/>
    <property type="project" value="UniProtKB-KW"/>
</dbReference>
<dbReference type="GO" id="GO:0006890">
    <property type="term" value="P:retrograde vesicle-mediated transport, Golgi to endoplasmic reticulum"/>
    <property type="evidence" value="ECO:0007669"/>
    <property type="project" value="InterPro"/>
</dbReference>
<dbReference type="CDD" id="cd14829">
    <property type="entry name" value="Zeta-COP"/>
    <property type="match status" value="1"/>
</dbReference>
<dbReference type="FunFam" id="3.30.450.60:FF:000014">
    <property type="entry name" value="Coatomer subunit zeta-2"/>
    <property type="match status" value="1"/>
</dbReference>
<dbReference type="Gene3D" id="3.30.450.60">
    <property type="match status" value="1"/>
</dbReference>
<dbReference type="InterPro" id="IPR022775">
    <property type="entry name" value="AP_mu_sigma_su"/>
</dbReference>
<dbReference type="InterPro" id="IPR039652">
    <property type="entry name" value="Coatomer_zeta"/>
</dbReference>
<dbReference type="InterPro" id="IPR011012">
    <property type="entry name" value="Longin-like_dom_sf"/>
</dbReference>
<dbReference type="PANTHER" id="PTHR11043:SF0">
    <property type="entry name" value="COATOMER SUBUNIT ZETA"/>
    <property type="match status" value="1"/>
</dbReference>
<dbReference type="PANTHER" id="PTHR11043">
    <property type="entry name" value="ZETA-COAT PROTEIN"/>
    <property type="match status" value="1"/>
</dbReference>
<dbReference type="Pfam" id="PF01217">
    <property type="entry name" value="Clat_adaptor_s"/>
    <property type="match status" value="1"/>
</dbReference>
<dbReference type="SUPFAM" id="SSF64356">
    <property type="entry name" value="SNARE-like"/>
    <property type="match status" value="1"/>
</dbReference>
<accession>Q940S5</accession>
<accession>Q9C956</accession>
<organism>
    <name type="scientific">Arabidopsis thaliana</name>
    <name type="common">Mouse-ear cress</name>
    <dbReference type="NCBI Taxonomy" id="3702"/>
    <lineage>
        <taxon>Eukaryota</taxon>
        <taxon>Viridiplantae</taxon>
        <taxon>Streptophyta</taxon>
        <taxon>Embryophyta</taxon>
        <taxon>Tracheophyta</taxon>
        <taxon>Spermatophyta</taxon>
        <taxon>Magnoliopsida</taxon>
        <taxon>eudicotyledons</taxon>
        <taxon>Gunneridae</taxon>
        <taxon>Pentapetalae</taxon>
        <taxon>rosids</taxon>
        <taxon>malvids</taxon>
        <taxon>Brassicales</taxon>
        <taxon>Brassicaceae</taxon>
        <taxon>Camelineae</taxon>
        <taxon>Arabidopsis</taxon>
    </lineage>
</organism>
<protein>
    <recommendedName>
        <fullName>Coatomer subunit zeta-1</fullName>
    </recommendedName>
    <alternativeName>
        <fullName>Zeta-1-coat protein</fullName>
    </alternativeName>
    <alternativeName>
        <fullName>Zeta-COP 1</fullName>
    </alternativeName>
</protein>
<evidence type="ECO:0000250" key="1"/>
<evidence type="ECO:0000250" key="2">
    <source>
        <dbReference type="UniProtKB" id="P53600"/>
    </source>
</evidence>
<evidence type="ECO:0000305" key="3"/>
<name>COPZ1_ARATH</name>
<feature type="chain" id="PRO_0000285610" description="Coatomer subunit zeta-1">
    <location>
        <begin position="1"/>
        <end position="177"/>
    </location>
</feature>